<feature type="chain" id="PRO_0000270702" description="Large ribosomal subunit protein bL21">
    <location>
        <begin position="1"/>
        <end position="102"/>
    </location>
</feature>
<gene>
    <name evidence="1" type="primary">rplU</name>
    <name type="ordered locus">PAM_086</name>
</gene>
<proteinExistence type="inferred from homology"/>
<evidence type="ECO:0000255" key="1">
    <source>
        <dbReference type="HAMAP-Rule" id="MF_01363"/>
    </source>
</evidence>
<evidence type="ECO:0000305" key="2"/>
<accession>Q6YRC9</accession>
<organism>
    <name type="scientific">Onion yellows phytoplasma (strain OY-M)</name>
    <dbReference type="NCBI Taxonomy" id="262768"/>
    <lineage>
        <taxon>Bacteria</taxon>
        <taxon>Bacillati</taxon>
        <taxon>Mycoplasmatota</taxon>
        <taxon>Mollicutes</taxon>
        <taxon>Acholeplasmatales</taxon>
        <taxon>Acholeplasmataceae</taxon>
        <taxon>Candidatus Phytoplasma</taxon>
        <taxon>16SrI (Aster yellows group)</taxon>
    </lineage>
</organism>
<reference key="1">
    <citation type="journal article" date="2004" name="Nat. Genet.">
        <title>Reductive evolution suggested from the complete genome sequence of a plant-pathogenic phytoplasma.</title>
        <authorList>
            <person name="Oshima K."/>
            <person name="Kakizawa S."/>
            <person name="Nishigawa H."/>
            <person name="Jung H.-Y."/>
            <person name="Wei W."/>
            <person name="Suzuki S."/>
            <person name="Arashida R."/>
            <person name="Nakata D."/>
            <person name="Miyata S."/>
            <person name="Ugaki M."/>
            <person name="Namba S."/>
        </authorList>
    </citation>
    <scope>NUCLEOTIDE SEQUENCE [LARGE SCALE GENOMIC DNA]</scope>
    <source>
        <strain>OY-M</strain>
    </source>
</reference>
<name>RL21_ONYPE</name>
<comment type="function">
    <text evidence="1">This protein binds to 23S rRNA in the presence of protein L20.</text>
</comment>
<comment type="subunit">
    <text evidence="1">Part of the 50S ribosomal subunit. Contacts protein L20.</text>
</comment>
<comment type="similarity">
    <text evidence="1">Belongs to the bacterial ribosomal protein bL21 family.</text>
</comment>
<comment type="sequence caution" evidence="2">
    <conflict type="erroneous initiation">
        <sequence resource="EMBL-CDS" id="BAD04171"/>
    </conflict>
</comment>
<sequence length="102" mass="11778">MFAIIKTGGKQFRVFEGQEIYVEKLNVEPETTYQFQEVLAVGGSNPVLGTPFVKDAKVTAQVIKHDRAKKIIVFKYKKRKKYRCKQGHRQSYTKLLITKITV</sequence>
<protein>
    <recommendedName>
        <fullName evidence="1">Large ribosomal subunit protein bL21</fullName>
    </recommendedName>
    <alternativeName>
        <fullName evidence="2">50S ribosomal protein L21</fullName>
    </alternativeName>
</protein>
<dbReference type="EMBL" id="AP006628">
    <property type="protein sequence ID" value="BAD04171.1"/>
    <property type="status" value="ALT_INIT"/>
    <property type="molecule type" value="Genomic_DNA"/>
</dbReference>
<dbReference type="SMR" id="Q6YRC9"/>
<dbReference type="STRING" id="262768.PAM_086"/>
<dbReference type="KEGG" id="poy:PAM_086"/>
<dbReference type="eggNOG" id="COG0261">
    <property type="taxonomic scope" value="Bacteria"/>
</dbReference>
<dbReference type="HOGENOM" id="CLU_061463_3_2_14"/>
<dbReference type="BioCyc" id="OYEL262768:G1G26-115-MONOMER"/>
<dbReference type="Proteomes" id="UP000002523">
    <property type="component" value="Chromosome"/>
</dbReference>
<dbReference type="GO" id="GO:0005737">
    <property type="term" value="C:cytoplasm"/>
    <property type="evidence" value="ECO:0007669"/>
    <property type="project" value="UniProtKB-ARBA"/>
</dbReference>
<dbReference type="GO" id="GO:1990904">
    <property type="term" value="C:ribonucleoprotein complex"/>
    <property type="evidence" value="ECO:0007669"/>
    <property type="project" value="UniProtKB-KW"/>
</dbReference>
<dbReference type="GO" id="GO:0005840">
    <property type="term" value="C:ribosome"/>
    <property type="evidence" value="ECO:0007669"/>
    <property type="project" value="UniProtKB-KW"/>
</dbReference>
<dbReference type="GO" id="GO:0019843">
    <property type="term" value="F:rRNA binding"/>
    <property type="evidence" value="ECO:0007669"/>
    <property type="project" value="UniProtKB-UniRule"/>
</dbReference>
<dbReference type="GO" id="GO:0003735">
    <property type="term" value="F:structural constituent of ribosome"/>
    <property type="evidence" value="ECO:0007669"/>
    <property type="project" value="InterPro"/>
</dbReference>
<dbReference type="GO" id="GO:0006412">
    <property type="term" value="P:translation"/>
    <property type="evidence" value="ECO:0007669"/>
    <property type="project" value="UniProtKB-UniRule"/>
</dbReference>
<dbReference type="HAMAP" id="MF_01363">
    <property type="entry name" value="Ribosomal_bL21"/>
    <property type="match status" value="1"/>
</dbReference>
<dbReference type="InterPro" id="IPR028909">
    <property type="entry name" value="bL21-like"/>
</dbReference>
<dbReference type="InterPro" id="IPR036164">
    <property type="entry name" value="bL21-like_sf"/>
</dbReference>
<dbReference type="InterPro" id="IPR001787">
    <property type="entry name" value="Ribosomal_bL21"/>
</dbReference>
<dbReference type="InterPro" id="IPR018258">
    <property type="entry name" value="Ribosomal_bL21_CS"/>
</dbReference>
<dbReference type="NCBIfam" id="TIGR00061">
    <property type="entry name" value="L21"/>
    <property type="match status" value="1"/>
</dbReference>
<dbReference type="PANTHER" id="PTHR21349">
    <property type="entry name" value="50S RIBOSOMAL PROTEIN L21"/>
    <property type="match status" value="1"/>
</dbReference>
<dbReference type="PANTHER" id="PTHR21349:SF0">
    <property type="entry name" value="LARGE RIBOSOMAL SUBUNIT PROTEIN BL21M"/>
    <property type="match status" value="1"/>
</dbReference>
<dbReference type="Pfam" id="PF00829">
    <property type="entry name" value="Ribosomal_L21p"/>
    <property type="match status" value="1"/>
</dbReference>
<dbReference type="SUPFAM" id="SSF141091">
    <property type="entry name" value="L21p-like"/>
    <property type="match status" value="1"/>
</dbReference>
<dbReference type="PROSITE" id="PS01169">
    <property type="entry name" value="RIBOSOMAL_L21"/>
    <property type="match status" value="1"/>
</dbReference>
<keyword id="KW-0687">Ribonucleoprotein</keyword>
<keyword id="KW-0689">Ribosomal protein</keyword>
<keyword id="KW-0694">RNA-binding</keyword>
<keyword id="KW-0699">rRNA-binding</keyword>